<comment type="function">
    <text evidence="1">Sigma factors are initiation factors that promote the attachment of RNA polymerase to specific initiation sites and are then released. This sigma factor is the primary sigma factor during exponential growth.</text>
</comment>
<comment type="subunit">
    <text evidence="1">Interacts transiently with the RNA polymerase catalytic core.</text>
</comment>
<comment type="subcellular location">
    <subcellularLocation>
        <location evidence="1">Cytoplasm</location>
    </subcellularLocation>
</comment>
<comment type="similarity">
    <text evidence="1">Belongs to the sigma-70 factor family. RpoD/SigA subfamily.</text>
</comment>
<keyword id="KW-0963">Cytoplasm</keyword>
<keyword id="KW-0238">DNA-binding</keyword>
<keyword id="KW-1185">Reference proteome</keyword>
<keyword id="KW-0731">Sigma factor</keyword>
<keyword id="KW-0804">Transcription</keyword>
<keyword id="KW-0805">Transcription regulation</keyword>
<evidence type="ECO:0000255" key="1">
    <source>
        <dbReference type="HAMAP-Rule" id="MF_00963"/>
    </source>
</evidence>
<evidence type="ECO:0000256" key="2">
    <source>
        <dbReference type="SAM" id="MobiDB-lite"/>
    </source>
</evidence>
<reference key="1">
    <citation type="submission" date="1995-05" db="EMBL/GenBank/DDBJ databases">
        <authorList>
            <person name="Zheng S."/>
            <person name="Scappino L."/>
            <person name="Haselkorn R."/>
        </authorList>
    </citation>
    <scope>NUCLEOTIDE SEQUENCE [GENOMIC DNA]</scope>
    <source>
        <strain>ATCC BAA-309 / NBRC 16581 / SB1003</strain>
    </source>
</reference>
<reference key="2">
    <citation type="journal article" date="2010" name="J. Bacteriol.">
        <title>Complete genome sequence of the photosynthetic purple nonsulfur bacterium Rhodobacter capsulatus SB 1003.</title>
        <authorList>
            <person name="Strnad H."/>
            <person name="Lapidus A."/>
            <person name="Paces J."/>
            <person name="Ulbrich P."/>
            <person name="Vlcek C."/>
            <person name="Paces V."/>
            <person name="Haselkorn R."/>
        </authorList>
    </citation>
    <scope>NUCLEOTIDE SEQUENCE [LARGE SCALE GENOMIC DNA]</scope>
    <source>
        <strain>ATCC BAA-309 / NBRC 16581 / SB1003</strain>
    </source>
</reference>
<gene>
    <name evidence="1" type="primary">rpoD</name>
    <name type="ordered locus">RCAP_rcc03054</name>
</gene>
<sequence>MAAKDIDDTKPDTAADEDASFDMSQAAVKRMIGEAKERGYITIDQLNAVMPPETVSGEQIEDVMSMLSEMGINVVEGEEVEESEGGEVVETGSGSREIAVAGAAGETLDRTDDPVRMYLREMGSVELLSREGEIAIAKRIEAGRNTMIAGLCESPLTFQAITIWRDELLSEEILLRDVIDLEATFGRSLDGDEGMEGMEGIEGPVVEGLDLETAEGAAPAARRPASDEPEYDADGNPISRIDEEEDDDDSSNMSLAAMEAALKPKVLETLELIARDYAKLAEMQDLRMSATLNEDGTFSVAEEAAYQKLRSEIVLLVNELHLHNNRIEALIDQLYGINRKIMSIDSGMVKLADAARINRREFIDEYRGYELDPTWMDRMSAKPARAWVTLFEKSRDKVEDLRHEMAQVGQYVGVDISEFRRIVNQVQKGEKEARQAKKEMVEANLRLVISIAKKYTNRGLQFLDLIQEGNIGLMKAVDKFEYRRGYKFSTYATWWIRQAITRSIADQARTIRIPVHMIETINKLVRTGRQMLHEIGREPTPEELAEKLQMPLEKVRKVMKIAKEPISLETPIGDEEDSQLGDFIEDKNAILPLDSAIQENLKETTTRVLASLTPREERVLRMRFGIGMNTDHTLEEVGQQFSVTRERIRQIEAKALRKLKHPSRSRKLRSFLDQ</sequence>
<proteinExistence type="inferred from homology"/>
<name>RPOD_RHOCB</name>
<feature type="chain" id="PRO_0000410702" description="RNA polymerase sigma factor RpoD">
    <location>
        <begin position="1"/>
        <end position="674"/>
    </location>
</feature>
<feature type="DNA-binding region" description="H-T-H motif" evidence="1">
    <location>
        <begin position="634"/>
        <end position="653"/>
    </location>
</feature>
<feature type="region of interest" description="Disordered" evidence="2">
    <location>
        <begin position="214"/>
        <end position="252"/>
    </location>
</feature>
<feature type="region of interest" description="Sigma-70 factor domain-2" evidence="1">
    <location>
        <begin position="440"/>
        <end position="510"/>
    </location>
</feature>
<feature type="region of interest" description="Sigma-70 factor domain-3" evidence="1">
    <location>
        <begin position="519"/>
        <end position="595"/>
    </location>
</feature>
<feature type="region of interest" description="Sigma-70 factor domain-4" evidence="1">
    <location>
        <begin position="608"/>
        <end position="661"/>
    </location>
</feature>
<feature type="short sequence motif" description="Interaction with polymerase core subunit RpoC">
    <location>
        <begin position="464"/>
        <end position="467"/>
    </location>
</feature>
<dbReference type="EMBL" id="U28162">
    <property type="protein sequence ID" value="AAA70413.1"/>
    <property type="molecule type" value="Genomic_DNA"/>
</dbReference>
<dbReference type="EMBL" id="CP001312">
    <property type="protein sequence ID" value="ADE86778.1"/>
    <property type="molecule type" value="Genomic_DNA"/>
</dbReference>
<dbReference type="RefSeq" id="WP_013068751.1">
    <property type="nucleotide sequence ID" value="NC_014034.1"/>
</dbReference>
<dbReference type="SMR" id="D5AQI9"/>
<dbReference type="STRING" id="272942.RCAP_rcc03054"/>
<dbReference type="GeneID" id="31491844"/>
<dbReference type="KEGG" id="rcp:RCAP_rcc03054"/>
<dbReference type="eggNOG" id="COG0568">
    <property type="taxonomic scope" value="Bacteria"/>
</dbReference>
<dbReference type="HOGENOM" id="CLU_014793_7_1_5"/>
<dbReference type="OrthoDB" id="9809557at2"/>
<dbReference type="Proteomes" id="UP000002361">
    <property type="component" value="Chromosome"/>
</dbReference>
<dbReference type="GO" id="GO:0005737">
    <property type="term" value="C:cytoplasm"/>
    <property type="evidence" value="ECO:0007669"/>
    <property type="project" value="UniProtKB-SubCell"/>
</dbReference>
<dbReference type="GO" id="GO:0003677">
    <property type="term" value="F:DNA binding"/>
    <property type="evidence" value="ECO:0007669"/>
    <property type="project" value="UniProtKB-UniRule"/>
</dbReference>
<dbReference type="GO" id="GO:0016987">
    <property type="term" value="F:sigma factor activity"/>
    <property type="evidence" value="ECO:0007669"/>
    <property type="project" value="UniProtKB-UniRule"/>
</dbReference>
<dbReference type="GO" id="GO:0006352">
    <property type="term" value="P:DNA-templated transcription initiation"/>
    <property type="evidence" value="ECO:0007669"/>
    <property type="project" value="UniProtKB-UniRule"/>
</dbReference>
<dbReference type="CDD" id="cd06171">
    <property type="entry name" value="Sigma70_r4"/>
    <property type="match status" value="1"/>
</dbReference>
<dbReference type="FunFam" id="1.10.10.10:FF:000002">
    <property type="entry name" value="RNA polymerase sigma factor SigA"/>
    <property type="match status" value="1"/>
</dbReference>
<dbReference type="FunFam" id="1.10.10.10:FF:000004">
    <property type="entry name" value="RNA polymerase sigma factor SigA"/>
    <property type="match status" value="1"/>
</dbReference>
<dbReference type="FunFam" id="1.10.601.10:FF:000001">
    <property type="entry name" value="RNA polymerase sigma factor SigA"/>
    <property type="match status" value="1"/>
</dbReference>
<dbReference type="Gene3D" id="1.10.601.10">
    <property type="entry name" value="RNA Polymerase Primary Sigma Factor"/>
    <property type="match status" value="1"/>
</dbReference>
<dbReference type="Gene3D" id="1.10.220.120">
    <property type="entry name" value="Sigma-70 factor, region 1.1"/>
    <property type="match status" value="1"/>
</dbReference>
<dbReference type="Gene3D" id="1.10.10.10">
    <property type="entry name" value="Winged helix-like DNA-binding domain superfamily/Winged helix DNA-binding domain"/>
    <property type="match status" value="2"/>
</dbReference>
<dbReference type="HAMAP" id="MF_00963">
    <property type="entry name" value="Sigma70_RpoD_SigA"/>
    <property type="match status" value="1"/>
</dbReference>
<dbReference type="InterPro" id="IPR014284">
    <property type="entry name" value="RNA_pol_sigma-70_dom"/>
</dbReference>
<dbReference type="InterPro" id="IPR000943">
    <property type="entry name" value="RNA_pol_sigma70"/>
</dbReference>
<dbReference type="InterPro" id="IPR009042">
    <property type="entry name" value="RNA_pol_sigma70_r1_2"/>
</dbReference>
<dbReference type="InterPro" id="IPR007627">
    <property type="entry name" value="RNA_pol_sigma70_r2"/>
</dbReference>
<dbReference type="InterPro" id="IPR007624">
    <property type="entry name" value="RNA_pol_sigma70_r3"/>
</dbReference>
<dbReference type="InterPro" id="IPR007630">
    <property type="entry name" value="RNA_pol_sigma70_r4"/>
</dbReference>
<dbReference type="InterPro" id="IPR007631">
    <property type="entry name" value="RNA_pol_sigma_70_non-ess"/>
</dbReference>
<dbReference type="InterPro" id="IPR007127">
    <property type="entry name" value="RNA_pol_sigma_70_r1_1"/>
</dbReference>
<dbReference type="InterPro" id="IPR042189">
    <property type="entry name" value="RNA_pol_sigma_70_r1_1_sf"/>
</dbReference>
<dbReference type="InterPro" id="IPR013325">
    <property type="entry name" value="RNA_pol_sigma_r2"/>
</dbReference>
<dbReference type="InterPro" id="IPR013324">
    <property type="entry name" value="RNA_pol_sigma_r3/r4-like"/>
</dbReference>
<dbReference type="InterPro" id="IPR012760">
    <property type="entry name" value="RNA_pol_sigma_RpoD_C"/>
</dbReference>
<dbReference type="InterPro" id="IPR050239">
    <property type="entry name" value="Sigma-70_RNA_pol_init_factors"/>
</dbReference>
<dbReference type="InterPro" id="IPR028630">
    <property type="entry name" value="Sigma70_RpoD"/>
</dbReference>
<dbReference type="InterPro" id="IPR036388">
    <property type="entry name" value="WH-like_DNA-bd_sf"/>
</dbReference>
<dbReference type="NCBIfam" id="NF004208">
    <property type="entry name" value="PRK05658.1"/>
    <property type="match status" value="1"/>
</dbReference>
<dbReference type="NCBIfam" id="TIGR02393">
    <property type="entry name" value="RpoD_Cterm"/>
    <property type="match status" value="1"/>
</dbReference>
<dbReference type="NCBIfam" id="TIGR02937">
    <property type="entry name" value="sigma70-ECF"/>
    <property type="match status" value="1"/>
</dbReference>
<dbReference type="PANTHER" id="PTHR30603">
    <property type="entry name" value="RNA POLYMERASE SIGMA FACTOR RPO"/>
    <property type="match status" value="1"/>
</dbReference>
<dbReference type="PANTHER" id="PTHR30603:SF60">
    <property type="entry name" value="RNA POLYMERASE SIGMA FACTOR RPOD"/>
    <property type="match status" value="1"/>
</dbReference>
<dbReference type="Pfam" id="PF04546">
    <property type="entry name" value="Sigma70_ner"/>
    <property type="match status" value="1"/>
</dbReference>
<dbReference type="Pfam" id="PF03979">
    <property type="entry name" value="Sigma70_r1_1"/>
    <property type="match status" value="1"/>
</dbReference>
<dbReference type="Pfam" id="PF00140">
    <property type="entry name" value="Sigma70_r1_2"/>
    <property type="match status" value="1"/>
</dbReference>
<dbReference type="Pfam" id="PF04542">
    <property type="entry name" value="Sigma70_r2"/>
    <property type="match status" value="1"/>
</dbReference>
<dbReference type="Pfam" id="PF04539">
    <property type="entry name" value="Sigma70_r3"/>
    <property type="match status" value="1"/>
</dbReference>
<dbReference type="Pfam" id="PF04545">
    <property type="entry name" value="Sigma70_r4"/>
    <property type="match status" value="1"/>
</dbReference>
<dbReference type="PRINTS" id="PR00046">
    <property type="entry name" value="SIGMA70FCT"/>
</dbReference>
<dbReference type="SUPFAM" id="SSF88946">
    <property type="entry name" value="Sigma2 domain of RNA polymerase sigma factors"/>
    <property type="match status" value="1"/>
</dbReference>
<dbReference type="SUPFAM" id="SSF88659">
    <property type="entry name" value="Sigma3 and sigma4 domains of RNA polymerase sigma factors"/>
    <property type="match status" value="2"/>
</dbReference>
<dbReference type="PROSITE" id="PS00715">
    <property type="entry name" value="SIGMA70_1"/>
    <property type="match status" value="1"/>
</dbReference>
<dbReference type="PROSITE" id="PS00716">
    <property type="entry name" value="SIGMA70_2"/>
    <property type="match status" value="1"/>
</dbReference>
<organism>
    <name type="scientific">Rhodobacter capsulatus (strain ATCC BAA-309 / NBRC 16581 / SB1003)</name>
    <dbReference type="NCBI Taxonomy" id="272942"/>
    <lineage>
        <taxon>Bacteria</taxon>
        <taxon>Pseudomonadati</taxon>
        <taxon>Pseudomonadota</taxon>
        <taxon>Alphaproteobacteria</taxon>
        <taxon>Rhodobacterales</taxon>
        <taxon>Rhodobacter group</taxon>
        <taxon>Rhodobacter</taxon>
    </lineage>
</organism>
<protein>
    <recommendedName>
        <fullName evidence="1">RNA polymerase sigma factor RpoD</fullName>
    </recommendedName>
    <alternativeName>
        <fullName evidence="1">Sigma-70</fullName>
    </alternativeName>
</protein>
<accession>D5AQI9</accession>
<accession>P46400</accession>